<gene>
    <name evidence="1" type="primary">ulaE</name>
    <name type="ordered locus">SeSA_A4655</name>
</gene>
<feature type="chain" id="PRO_1000188838" description="L-ribulose-5-phosphate 3-epimerase UlaE">
    <location>
        <begin position="1"/>
        <end position="284"/>
    </location>
</feature>
<accession>B4TT29</accession>
<sequence length="284" mass="31806">MLSKQIPLGIYEKALPAGECWLERLRLAKTLGFDFVEMSVDETDARLARLDWSREQRLALVSAVAETGVRVPSMCLSAHRRFPLGSEDDAVRAQGLEIMRKAIQFAQDVGIRVIQLAGYDVYYQQANDETRCRFRDGLKESVDMASRAQVTLAMEIMDYPLMNSISKALGYAHYLNNPWFQLYPDIGNLSAWDNDVQMELQAGIGHIVAVHVKDTKPGVFKNVPFGEGVVDFERCFETLKQSGYCGPYLIEMWSETAENPAAEVAKARDWVKARMASAGLVEAA</sequence>
<keyword id="KW-0413">Isomerase</keyword>
<organism>
    <name type="scientific">Salmonella schwarzengrund (strain CVM19633)</name>
    <dbReference type="NCBI Taxonomy" id="439843"/>
    <lineage>
        <taxon>Bacteria</taxon>
        <taxon>Pseudomonadati</taxon>
        <taxon>Pseudomonadota</taxon>
        <taxon>Gammaproteobacteria</taxon>
        <taxon>Enterobacterales</taxon>
        <taxon>Enterobacteriaceae</taxon>
        <taxon>Salmonella</taxon>
    </lineage>
</organism>
<proteinExistence type="inferred from homology"/>
<evidence type="ECO:0000255" key="1">
    <source>
        <dbReference type="HAMAP-Rule" id="MF_01951"/>
    </source>
</evidence>
<protein>
    <recommendedName>
        <fullName evidence="1">L-ribulose-5-phosphate 3-epimerase UlaE</fullName>
        <ecNumber evidence="1">5.1.3.22</ecNumber>
    </recommendedName>
    <alternativeName>
        <fullName evidence="1">L-ascorbate utilization protein E</fullName>
    </alternativeName>
    <alternativeName>
        <fullName evidence="1">L-xylulose-5-phosphate 3-epimerase</fullName>
    </alternativeName>
</protein>
<reference key="1">
    <citation type="journal article" date="2011" name="J. Bacteriol.">
        <title>Comparative genomics of 28 Salmonella enterica isolates: evidence for CRISPR-mediated adaptive sublineage evolution.</title>
        <authorList>
            <person name="Fricke W.F."/>
            <person name="Mammel M.K."/>
            <person name="McDermott P.F."/>
            <person name="Tartera C."/>
            <person name="White D.G."/>
            <person name="Leclerc J.E."/>
            <person name="Ravel J."/>
            <person name="Cebula T.A."/>
        </authorList>
    </citation>
    <scope>NUCLEOTIDE SEQUENCE [LARGE SCALE GENOMIC DNA]</scope>
    <source>
        <strain>CVM19633</strain>
    </source>
</reference>
<name>ULAE_SALSV</name>
<comment type="function">
    <text evidence="1">Catalyzes the isomerization of L-xylulose-5-phosphate to L-ribulose-5-phosphate. Is involved in the anaerobic L-ascorbate utilization.</text>
</comment>
<comment type="catalytic activity">
    <reaction evidence="1">
        <text>L-ribulose 5-phosphate = L-xylulose 5-phosphate</text>
        <dbReference type="Rhea" id="RHEA:18497"/>
        <dbReference type="ChEBI" id="CHEBI:57829"/>
        <dbReference type="ChEBI" id="CHEBI:58226"/>
        <dbReference type="EC" id="5.1.3.22"/>
    </reaction>
</comment>
<comment type="pathway">
    <text evidence="1">Cofactor degradation; L-ascorbate degradation; D-xylulose 5-phosphate from L-ascorbate: step 3/4.</text>
</comment>
<comment type="induction">
    <text evidence="1">Induced by L-ascorbate. Repressed by UlaR.</text>
</comment>
<comment type="similarity">
    <text evidence="1">Belongs to the L-ribulose-5-phosphate 3-epimerase family.</text>
</comment>
<dbReference type="EC" id="5.1.3.22" evidence="1"/>
<dbReference type="EMBL" id="CP001127">
    <property type="protein sequence ID" value="ACF89614.1"/>
    <property type="molecule type" value="Genomic_DNA"/>
</dbReference>
<dbReference type="RefSeq" id="WP_000949530.1">
    <property type="nucleotide sequence ID" value="NC_011094.1"/>
</dbReference>
<dbReference type="SMR" id="B4TT29"/>
<dbReference type="KEGG" id="sew:SeSA_A4655"/>
<dbReference type="HOGENOM" id="CLU_082738_0_0_6"/>
<dbReference type="UniPathway" id="UPA00263">
    <property type="reaction ID" value="UER00379"/>
</dbReference>
<dbReference type="Proteomes" id="UP000001865">
    <property type="component" value="Chromosome"/>
</dbReference>
<dbReference type="GO" id="GO:0016861">
    <property type="term" value="F:intramolecular oxidoreductase activity, interconverting aldoses and ketoses"/>
    <property type="evidence" value="ECO:0007669"/>
    <property type="project" value="InterPro"/>
</dbReference>
<dbReference type="GO" id="GO:0034015">
    <property type="term" value="F:L-ribulose-5-phosphate 3-epimerase activity"/>
    <property type="evidence" value="ECO:0007669"/>
    <property type="project" value="UniProtKB-UniRule"/>
</dbReference>
<dbReference type="GO" id="GO:0019854">
    <property type="term" value="P:L-ascorbic acid catabolic process"/>
    <property type="evidence" value="ECO:0007669"/>
    <property type="project" value="UniProtKB-UniRule"/>
</dbReference>
<dbReference type="FunFam" id="3.20.20.150:FF:000003">
    <property type="entry name" value="L-ribulose-5-phosphate 3-epimerase UlaE"/>
    <property type="match status" value="1"/>
</dbReference>
<dbReference type="Gene3D" id="3.20.20.150">
    <property type="entry name" value="Divalent-metal-dependent TIM barrel enzymes"/>
    <property type="match status" value="1"/>
</dbReference>
<dbReference type="HAMAP" id="MF_01951">
    <property type="entry name" value="UlaE"/>
    <property type="match status" value="1"/>
</dbReference>
<dbReference type="InterPro" id="IPR004560">
    <property type="entry name" value="L-Ru-5P_3-Epase"/>
</dbReference>
<dbReference type="InterPro" id="IPR023492">
    <property type="entry name" value="L-Ru-5P_3-Epase_Enterobacteria"/>
</dbReference>
<dbReference type="InterPro" id="IPR050417">
    <property type="entry name" value="Sugar_Epim/Isomerase"/>
</dbReference>
<dbReference type="InterPro" id="IPR036237">
    <property type="entry name" value="Xyl_isomerase-like_sf"/>
</dbReference>
<dbReference type="InterPro" id="IPR013022">
    <property type="entry name" value="Xyl_isomerase-like_TIM-brl"/>
</dbReference>
<dbReference type="NCBIfam" id="TIGR00542">
    <property type="entry name" value="hxl6Piso_put"/>
    <property type="match status" value="1"/>
</dbReference>
<dbReference type="NCBIfam" id="NF009688">
    <property type="entry name" value="PRK13209.1"/>
    <property type="match status" value="1"/>
</dbReference>
<dbReference type="NCBIfam" id="NF009689">
    <property type="entry name" value="PRK13210.1"/>
    <property type="match status" value="1"/>
</dbReference>
<dbReference type="PANTHER" id="PTHR43489">
    <property type="entry name" value="ISOMERASE"/>
    <property type="match status" value="1"/>
</dbReference>
<dbReference type="PANTHER" id="PTHR43489:SF8">
    <property type="entry name" value="L-RIBULOSE-5-PHOSPHATE 3-EPIMERASE ULAE"/>
    <property type="match status" value="1"/>
</dbReference>
<dbReference type="Pfam" id="PF01261">
    <property type="entry name" value="AP_endonuc_2"/>
    <property type="match status" value="1"/>
</dbReference>
<dbReference type="SUPFAM" id="SSF51658">
    <property type="entry name" value="Xylose isomerase-like"/>
    <property type="match status" value="1"/>
</dbReference>